<keyword id="KW-0963">Cytoplasm</keyword>
<keyword id="KW-0324">Glycolysis</keyword>
<keyword id="KW-0456">Lyase</keyword>
<keyword id="KW-0460">Magnesium</keyword>
<keyword id="KW-0479">Metal-binding</keyword>
<keyword id="KW-1185">Reference proteome</keyword>
<keyword id="KW-0964">Secreted</keyword>
<dbReference type="EC" id="4.2.1.11" evidence="1"/>
<dbReference type="EMBL" id="CP000250">
    <property type="protein sequence ID" value="ABD07480.1"/>
    <property type="molecule type" value="Genomic_DNA"/>
</dbReference>
<dbReference type="RefSeq" id="WP_011441665.1">
    <property type="nucleotide sequence ID" value="NC_007778.1"/>
</dbReference>
<dbReference type="SMR" id="Q2IWD0"/>
<dbReference type="STRING" id="316058.RPB_2778"/>
<dbReference type="KEGG" id="rpb:RPB_2778"/>
<dbReference type="eggNOG" id="COG0148">
    <property type="taxonomic scope" value="Bacteria"/>
</dbReference>
<dbReference type="HOGENOM" id="CLU_031223_2_1_5"/>
<dbReference type="OrthoDB" id="9804716at2"/>
<dbReference type="UniPathway" id="UPA00109">
    <property type="reaction ID" value="UER00187"/>
</dbReference>
<dbReference type="Proteomes" id="UP000008809">
    <property type="component" value="Chromosome"/>
</dbReference>
<dbReference type="GO" id="GO:0009986">
    <property type="term" value="C:cell surface"/>
    <property type="evidence" value="ECO:0007669"/>
    <property type="project" value="UniProtKB-SubCell"/>
</dbReference>
<dbReference type="GO" id="GO:0005576">
    <property type="term" value="C:extracellular region"/>
    <property type="evidence" value="ECO:0007669"/>
    <property type="project" value="UniProtKB-SubCell"/>
</dbReference>
<dbReference type="GO" id="GO:0000015">
    <property type="term" value="C:phosphopyruvate hydratase complex"/>
    <property type="evidence" value="ECO:0007669"/>
    <property type="project" value="InterPro"/>
</dbReference>
<dbReference type="GO" id="GO:0000287">
    <property type="term" value="F:magnesium ion binding"/>
    <property type="evidence" value="ECO:0007669"/>
    <property type="project" value="UniProtKB-UniRule"/>
</dbReference>
<dbReference type="GO" id="GO:0004634">
    <property type="term" value="F:phosphopyruvate hydratase activity"/>
    <property type="evidence" value="ECO:0007669"/>
    <property type="project" value="UniProtKB-UniRule"/>
</dbReference>
<dbReference type="GO" id="GO:0006096">
    <property type="term" value="P:glycolytic process"/>
    <property type="evidence" value="ECO:0007669"/>
    <property type="project" value="UniProtKB-UniRule"/>
</dbReference>
<dbReference type="CDD" id="cd03313">
    <property type="entry name" value="enolase"/>
    <property type="match status" value="1"/>
</dbReference>
<dbReference type="FunFam" id="3.20.20.120:FF:000001">
    <property type="entry name" value="Enolase"/>
    <property type="match status" value="1"/>
</dbReference>
<dbReference type="FunFam" id="3.30.390.10:FF:000001">
    <property type="entry name" value="Enolase"/>
    <property type="match status" value="1"/>
</dbReference>
<dbReference type="Gene3D" id="3.20.20.120">
    <property type="entry name" value="Enolase-like C-terminal domain"/>
    <property type="match status" value="1"/>
</dbReference>
<dbReference type="Gene3D" id="3.30.390.10">
    <property type="entry name" value="Enolase-like, N-terminal domain"/>
    <property type="match status" value="1"/>
</dbReference>
<dbReference type="HAMAP" id="MF_00318">
    <property type="entry name" value="Enolase"/>
    <property type="match status" value="1"/>
</dbReference>
<dbReference type="InterPro" id="IPR000941">
    <property type="entry name" value="Enolase"/>
</dbReference>
<dbReference type="InterPro" id="IPR036849">
    <property type="entry name" value="Enolase-like_C_sf"/>
</dbReference>
<dbReference type="InterPro" id="IPR029017">
    <property type="entry name" value="Enolase-like_N"/>
</dbReference>
<dbReference type="InterPro" id="IPR020810">
    <property type="entry name" value="Enolase_C"/>
</dbReference>
<dbReference type="InterPro" id="IPR020809">
    <property type="entry name" value="Enolase_CS"/>
</dbReference>
<dbReference type="InterPro" id="IPR020811">
    <property type="entry name" value="Enolase_N"/>
</dbReference>
<dbReference type="NCBIfam" id="TIGR01060">
    <property type="entry name" value="eno"/>
    <property type="match status" value="1"/>
</dbReference>
<dbReference type="PANTHER" id="PTHR11902">
    <property type="entry name" value="ENOLASE"/>
    <property type="match status" value="1"/>
</dbReference>
<dbReference type="PANTHER" id="PTHR11902:SF1">
    <property type="entry name" value="ENOLASE"/>
    <property type="match status" value="1"/>
</dbReference>
<dbReference type="Pfam" id="PF00113">
    <property type="entry name" value="Enolase_C"/>
    <property type="match status" value="1"/>
</dbReference>
<dbReference type="Pfam" id="PF03952">
    <property type="entry name" value="Enolase_N"/>
    <property type="match status" value="1"/>
</dbReference>
<dbReference type="PIRSF" id="PIRSF001400">
    <property type="entry name" value="Enolase"/>
    <property type="match status" value="1"/>
</dbReference>
<dbReference type="PRINTS" id="PR00148">
    <property type="entry name" value="ENOLASE"/>
</dbReference>
<dbReference type="SFLD" id="SFLDS00001">
    <property type="entry name" value="Enolase"/>
    <property type="match status" value="1"/>
</dbReference>
<dbReference type="SFLD" id="SFLDF00002">
    <property type="entry name" value="enolase"/>
    <property type="match status" value="1"/>
</dbReference>
<dbReference type="SMART" id="SM01192">
    <property type="entry name" value="Enolase_C"/>
    <property type="match status" value="1"/>
</dbReference>
<dbReference type="SMART" id="SM01193">
    <property type="entry name" value="Enolase_N"/>
    <property type="match status" value="1"/>
</dbReference>
<dbReference type="SUPFAM" id="SSF51604">
    <property type="entry name" value="Enolase C-terminal domain-like"/>
    <property type="match status" value="1"/>
</dbReference>
<dbReference type="SUPFAM" id="SSF54826">
    <property type="entry name" value="Enolase N-terminal domain-like"/>
    <property type="match status" value="1"/>
</dbReference>
<dbReference type="PROSITE" id="PS00164">
    <property type="entry name" value="ENOLASE"/>
    <property type="match status" value="1"/>
</dbReference>
<organism>
    <name type="scientific">Rhodopseudomonas palustris (strain HaA2)</name>
    <dbReference type="NCBI Taxonomy" id="316058"/>
    <lineage>
        <taxon>Bacteria</taxon>
        <taxon>Pseudomonadati</taxon>
        <taxon>Pseudomonadota</taxon>
        <taxon>Alphaproteobacteria</taxon>
        <taxon>Hyphomicrobiales</taxon>
        <taxon>Nitrobacteraceae</taxon>
        <taxon>Rhodopseudomonas</taxon>
    </lineage>
</organism>
<accession>Q2IWD0</accession>
<reference key="1">
    <citation type="submission" date="2006-01" db="EMBL/GenBank/DDBJ databases">
        <title>Complete sequence of Rhodopseudomonas palustris HaA2.</title>
        <authorList>
            <consortium name="US DOE Joint Genome Institute"/>
            <person name="Copeland A."/>
            <person name="Lucas S."/>
            <person name="Lapidus A."/>
            <person name="Barry K."/>
            <person name="Detter J.C."/>
            <person name="Glavina T."/>
            <person name="Hammon N."/>
            <person name="Israni S."/>
            <person name="Pitluck S."/>
            <person name="Chain P."/>
            <person name="Malfatti S."/>
            <person name="Shin M."/>
            <person name="Vergez L."/>
            <person name="Schmutz J."/>
            <person name="Larimer F."/>
            <person name="Land M."/>
            <person name="Hauser L."/>
            <person name="Pelletier D.A."/>
            <person name="Kyrpides N."/>
            <person name="Anderson I."/>
            <person name="Oda Y."/>
            <person name="Harwood C.S."/>
            <person name="Richardson P."/>
        </authorList>
    </citation>
    <scope>NUCLEOTIDE SEQUENCE [LARGE SCALE GENOMIC DNA]</scope>
    <source>
        <strain>HaA2</strain>
    </source>
</reference>
<comment type="function">
    <text evidence="1">Catalyzes the reversible conversion of 2-phosphoglycerate (2-PG) into phosphoenolpyruvate (PEP). It is essential for the degradation of carbohydrates via glycolysis.</text>
</comment>
<comment type="catalytic activity">
    <reaction evidence="1">
        <text>(2R)-2-phosphoglycerate = phosphoenolpyruvate + H2O</text>
        <dbReference type="Rhea" id="RHEA:10164"/>
        <dbReference type="ChEBI" id="CHEBI:15377"/>
        <dbReference type="ChEBI" id="CHEBI:58289"/>
        <dbReference type="ChEBI" id="CHEBI:58702"/>
        <dbReference type="EC" id="4.2.1.11"/>
    </reaction>
</comment>
<comment type="cofactor">
    <cofactor evidence="1">
        <name>Mg(2+)</name>
        <dbReference type="ChEBI" id="CHEBI:18420"/>
    </cofactor>
    <text evidence="1">Binds a second Mg(2+) ion via substrate during catalysis.</text>
</comment>
<comment type="pathway">
    <text evidence="1">Carbohydrate degradation; glycolysis; pyruvate from D-glyceraldehyde 3-phosphate: step 4/5.</text>
</comment>
<comment type="subcellular location">
    <subcellularLocation>
        <location evidence="1">Cytoplasm</location>
    </subcellularLocation>
    <subcellularLocation>
        <location evidence="1">Secreted</location>
    </subcellularLocation>
    <subcellularLocation>
        <location evidence="1">Cell surface</location>
    </subcellularLocation>
    <text evidence="1">Fractions of enolase are present in both the cytoplasm and on the cell surface.</text>
</comment>
<comment type="similarity">
    <text evidence="1">Belongs to the enolase family.</text>
</comment>
<protein>
    <recommendedName>
        <fullName evidence="1">Enolase</fullName>
        <ecNumber evidence="1">4.2.1.11</ecNumber>
    </recommendedName>
    <alternativeName>
        <fullName evidence="1">2-phospho-D-glycerate hydro-lyase</fullName>
    </alternativeName>
    <alternativeName>
        <fullName evidence="1">2-phosphoglycerate dehydratase</fullName>
    </alternativeName>
</protein>
<gene>
    <name evidence="1" type="primary">eno</name>
    <name type="ordered locus">RPB_2778</name>
</gene>
<sequence length="427" mass="45053">MTAIVDIIGREILDSRGNPTVEVDVVLEDGSVGRAAVPSGASTGAHEAVELRDGDKSRYLGKGVLKAVEAVNGELFDALGGMDAEAQVQIDQTMIELDGTPNKSRLGANAILGVSLAVAKAAASSYDLPLYRYVGGTSARTLPVPMMNIINGGAHADNPIDFQEFMIMPAGAASFSEALRCGSEIFHTLKGELKKAGHNTNVGDEGGFAPNLPSADAALDFVVSAIGKAGYKAGEDVMIALDPASTEFFKNGKYVYEAEGRSLGPQEQAKYLADLVARYPIVSIEDGMAEDDIEGWKAITGLIGDKCQLVGDDLFVTNVTRLYDGIKNGYANSILIKVNQIGTLTETLAAVEMAHKAGYTAVMSHRSGETEDSTIADLAVATNCGQIKTGSLARADRTSKYNQLLRIEQELGTQAHFAGKAALKAFR</sequence>
<evidence type="ECO:0000255" key="1">
    <source>
        <dbReference type="HAMAP-Rule" id="MF_00318"/>
    </source>
</evidence>
<proteinExistence type="inferred from homology"/>
<name>ENO_RHOP2</name>
<feature type="chain" id="PRO_0000267093" description="Enolase">
    <location>
        <begin position="1"/>
        <end position="427"/>
    </location>
</feature>
<feature type="active site" description="Proton donor" evidence="1">
    <location>
        <position position="205"/>
    </location>
</feature>
<feature type="active site" description="Proton acceptor" evidence="1">
    <location>
        <position position="337"/>
    </location>
</feature>
<feature type="binding site" evidence="1">
    <location>
        <position position="163"/>
    </location>
    <ligand>
        <name>(2R)-2-phosphoglycerate</name>
        <dbReference type="ChEBI" id="CHEBI:58289"/>
    </ligand>
</feature>
<feature type="binding site" evidence="1">
    <location>
        <position position="242"/>
    </location>
    <ligand>
        <name>Mg(2+)</name>
        <dbReference type="ChEBI" id="CHEBI:18420"/>
    </ligand>
</feature>
<feature type="binding site" evidence="1">
    <location>
        <position position="285"/>
    </location>
    <ligand>
        <name>Mg(2+)</name>
        <dbReference type="ChEBI" id="CHEBI:18420"/>
    </ligand>
</feature>
<feature type="binding site" evidence="1">
    <location>
        <position position="312"/>
    </location>
    <ligand>
        <name>Mg(2+)</name>
        <dbReference type="ChEBI" id="CHEBI:18420"/>
    </ligand>
</feature>
<feature type="binding site" evidence="1">
    <location>
        <position position="337"/>
    </location>
    <ligand>
        <name>(2R)-2-phosphoglycerate</name>
        <dbReference type="ChEBI" id="CHEBI:58289"/>
    </ligand>
</feature>
<feature type="binding site" evidence="1">
    <location>
        <position position="366"/>
    </location>
    <ligand>
        <name>(2R)-2-phosphoglycerate</name>
        <dbReference type="ChEBI" id="CHEBI:58289"/>
    </ligand>
</feature>
<feature type="binding site" evidence="1">
    <location>
        <position position="367"/>
    </location>
    <ligand>
        <name>(2R)-2-phosphoglycerate</name>
        <dbReference type="ChEBI" id="CHEBI:58289"/>
    </ligand>
</feature>
<feature type="binding site" evidence="1">
    <location>
        <position position="388"/>
    </location>
    <ligand>
        <name>(2R)-2-phosphoglycerate</name>
        <dbReference type="ChEBI" id="CHEBI:58289"/>
    </ligand>
</feature>